<name>ENV_SRV2R</name>
<proteinExistence type="inferred from homology"/>
<keyword id="KW-0165">Cleavage on pair of basic residues</keyword>
<keyword id="KW-0175">Coiled coil</keyword>
<keyword id="KW-1015">Disulfide bond</keyword>
<keyword id="KW-1169">Fusion of virus membrane with host cell membrane</keyword>
<keyword id="KW-1168">Fusion of virus membrane with host membrane</keyword>
<keyword id="KW-0325">Glycoprotein</keyword>
<keyword id="KW-1032">Host cell membrane</keyword>
<keyword id="KW-1043">Host membrane</keyword>
<keyword id="KW-0945">Host-virus interaction</keyword>
<keyword id="KW-0472">Membrane</keyword>
<keyword id="KW-0732">Signal</keyword>
<keyword id="KW-0812">Transmembrane</keyword>
<keyword id="KW-1133">Transmembrane helix</keyword>
<keyword id="KW-1161">Viral attachment to host cell</keyword>
<keyword id="KW-0261">Viral envelope protein</keyword>
<keyword id="KW-1162">Viral penetration into host cytoplasm</keyword>
<keyword id="KW-0946">Virion</keyword>
<keyword id="KW-1160">Virus entry into host cell</keyword>
<accession>P51520</accession>
<dbReference type="EMBL" id="L38695">
    <property type="protein sequence ID" value="AAA68002.1"/>
    <property type="molecule type" value="Genomic_DNA"/>
</dbReference>
<dbReference type="SMR" id="P51520"/>
<dbReference type="GlyCosmos" id="P51520">
    <property type="glycosylation" value="11 sites, No reported glycans"/>
</dbReference>
<dbReference type="GO" id="GO:0020002">
    <property type="term" value="C:host cell plasma membrane"/>
    <property type="evidence" value="ECO:0007669"/>
    <property type="project" value="UniProtKB-SubCell"/>
</dbReference>
<dbReference type="GO" id="GO:0016020">
    <property type="term" value="C:membrane"/>
    <property type="evidence" value="ECO:0007669"/>
    <property type="project" value="UniProtKB-KW"/>
</dbReference>
<dbReference type="GO" id="GO:0019031">
    <property type="term" value="C:viral envelope"/>
    <property type="evidence" value="ECO:0007669"/>
    <property type="project" value="UniProtKB-KW"/>
</dbReference>
<dbReference type="GO" id="GO:0055036">
    <property type="term" value="C:virion membrane"/>
    <property type="evidence" value="ECO:0007669"/>
    <property type="project" value="UniProtKB-SubCell"/>
</dbReference>
<dbReference type="GO" id="GO:0019064">
    <property type="term" value="P:fusion of virus membrane with host plasma membrane"/>
    <property type="evidence" value="ECO:0007669"/>
    <property type="project" value="UniProtKB-KW"/>
</dbReference>
<dbReference type="GO" id="GO:0046718">
    <property type="term" value="P:symbiont entry into host cell"/>
    <property type="evidence" value="ECO:0007669"/>
    <property type="project" value="UniProtKB-KW"/>
</dbReference>
<dbReference type="GO" id="GO:0019062">
    <property type="term" value="P:virion attachment to host cell"/>
    <property type="evidence" value="ECO:0007669"/>
    <property type="project" value="UniProtKB-KW"/>
</dbReference>
<dbReference type="CDD" id="cd09851">
    <property type="entry name" value="HTLV-1-like_HR1-HR2"/>
    <property type="match status" value="1"/>
</dbReference>
<dbReference type="Gene3D" id="1.10.287.210">
    <property type="match status" value="1"/>
</dbReference>
<dbReference type="InterPro" id="IPR018154">
    <property type="entry name" value="TLV/ENV_coat_polyprotein"/>
</dbReference>
<dbReference type="PANTHER" id="PTHR10424:SF75">
    <property type="entry name" value="ENDOGENOUS RETROVIRUS GROUP S71 MEMBER 1 ENV POLYPROTEIN"/>
    <property type="match status" value="1"/>
</dbReference>
<dbReference type="PANTHER" id="PTHR10424">
    <property type="entry name" value="VIRAL ENVELOPE PROTEIN"/>
    <property type="match status" value="1"/>
</dbReference>
<dbReference type="Pfam" id="PF00429">
    <property type="entry name" value="TLV_coat"/>
    <property type="match status" value="1"/>
</dbReference>
<dbReference type="SUPFAM" id="SSF58069">
    <property type="entry name" value="Virus ectodomain"/>
    <property type="match status" value="1"/>
</dbReference>
<organismHost>
    <name type="scientific">Macaca mulatta</name>
    <name type="common">Rhesus macaque</name>
    <dbReference type="NCBI Taxonomy" id="9544"/>
</organismHost>
<gene>
    <name type="primary">env</name>
</gene>
<evidence type="ECO:0000250" key="1"/>
<evidence type="ECO:0000255" key="2"/>
<sequence>MTVKDIPFWRVLLIFQTARVYAGFGDPREAITIIHQQHGKPCDCAGGYVITAPTVYLATVSCSSHTAYQPSDSLKWRCVSNPTLANGENIGNCPCQTFKESVHSSCYTTYQECFFGNKTYYTAILASNRAPTIGTSNVPTVLGNTHNLLSAGCTGTVGQHICWNPKAPVHISDGGGPQDKAREIAVQKRLEEIHRSLFPELRYHPLALPKARGKEKIDAQTFNLLTATYSLLNKSNPNLANECWLCLPSGNPVPLAIPSNDSFLGSNLSCPIIPPLLVQPLEFINLINASCLYSPSQNNSFDVDVGLVEFTNCSTTLNISHSLCAPNSSVFVCGNNKAYTYLPTNWTGTCVLATLLPDIDIVPGDAPVPVPAIDHYLHRARRAVQFIPLLVGLGITTAVSTGTTGLGYSITQYTKLSRQLISDVQAISSTIQDLQDQVDSLAEVVLQNRRGLDLFTAEQGGICLALQEKCCFYANKSGIVRDKIKALQEDLEKRRKEIIDNPFWTGLHGLLPYLLPLLRPLLCLLLLITFGPLIFNKIIAFVKQQMDAIQAKPIQVHYHRLEQEDNGGVYLRVS</sequence>
<protein>
    <recommendedName>
        <fullName>Envelope glycoprotein</fullName>
    </recommendedName>
    <alternativeName>
        <fullName>Env polyprotein</fullName>
    </alternativeName>
    <component>
        <recommendedName>
            <fullName>Surface protein</fullName>
            <shortName>SU</shortName>
        </recommendedName>
        <alternativeName>
            <fullName>Glycoprotein 70</fullName>
            <shortName>gp70</shortName>
        </alternativeName>
    </component>
    <component>
        <recommendedName>
            <fullName>Transmembrane protein</fullName>
            <shortName>TM</shortName>
        </recommendedName>
        <alternativeName>
            <fullName>Glycoprotein 20</fullName>
            <shortName>gp20</shortName>
        </alternativeName>
    </component>
    <component>
        <recommendedName>
            <fullName>R-peptide</fullName>
        </recommendedName>
    </component>
</protein>
<comment type="function">
    <text evidence="1">The surface protein (SU) attaches the virus to the host cell by binding to its receptor. This interaction triggers the refolding of the transmembrane protein (TM) and is thought to activate its fusogenic potential by unmasking its fusion peptide. Fusion occurs at the host cell plasma membrane (By similarity).</text>
</comment>
<comment type="function">
    <text evidence="1">The transmembrane protein (TM) acts as a class I viral fusion protein. Under the current model, the protein has at least 3 conformational states: pre-fusion native state, pre-hairpin intermediate state, and post-fusion hairpin state. During viral and target cell membrane fusion, the coiled coil regions (heptad repeats) assume a trimer-of-hairpins structure, positioning the fusion peptide in close proximity to the C-terminal region of the ectodomain. The formation of this structure appears to drive apposition and subsequent fusion of viral and target cell membranes. Membranes fusion leads to delivery of the nucleocapsid into the cytoplasm (By similarity).</text>
</comment>
<comment type="subunit">
    <text evidence="1">The mature envelope protein (Env) consists of a trimer of SU-TM heterodimers attached by a labile interchain disulfide bond.</text>
</comment>
<comment type="subcellular location">
    <molecule>Transmembrane protein</molecule>
    <subcellularLocation>
        <location evidence="1">Virion membrane</location>
        <topology evidence="1">Single-pass type I membrane protein</topology>
    </subcellularLocation>
    <subcellularLocation>
        <location evidence="1">Host cell membrane</location>
        <topology evidence="1">Single-pass type I membrane protein</topology>
    </subcellularLocation>
</comment>
<comment type="subcellular location">
    <molecule>Surface protein</molecule>
    <subcellularLocation>
        <location>Virion membrane</location>
        <topology>Peripheral membrane protein</topology>
    </subcellularLocation>
    <subcellularLocation>
        <location evidence="1">Host cell membrane</location>
        <topology evidence="1">Peripheral membrane protein</topology>
    </subcellularLocation>
    <text evidence="1">The surface protein is not anchored to the viral envelope, but associates with the extravirion surface through its binding to TM. Both proteins are thought to be concentrated at the site of budding and incorporated into the virions possibly by contacts between the cytoplasmic tail of Env and the N-terminus of Gag (By similarity).</text>
</comment>
<comment type="domain">
    <text evidence="1">The YXXL motif is involved in determining the exact site of viral release at the surface of infected mononuclear cells and promotes endocytosis.</text>
</comment>
<comment type="domain">
    <text evidence="1">The 17 amino acids long immunosuppressive region is present in many retroviral envelope proteins. Synthetic peptides derived from this relatively conserved sequence inhibit immune function in vitro and in vivo (By similarity).</text>
</comment>
<comment type="PTM">
    <text evidence="1">Specific enzymatic cleavages in vivo yield mature proteins. Envelope glycoproteins are synthesized as an inactive precursor that is N-glycosylated and processed likely by host cell furin or by a furin-like protease in the Golgi to yield the mature SU and TM proteins. The cleavage site between SU and TM requires the minimal sequence [KR]-X-[KR]-R. The R-peptide is released from the C-terminus of the cytoplasmic tail of the TM protein upon particle formation as a result of proteolytic cleavage by the viral protease. Cleavage of this peptide is required for TM to become fusogenic (By similarity).</text>
</comment>
<comment type="PTM">
    <text evidence="1">The CXXC motif is highly conserved across a broad range of retroviral envelope proteins. It is thought to participate in the formation of a labile disulfide bond possibly with the CX6CC motif present in the transmembrane protein. Isomerization of the intersubunit disulfide bond to an SU intrachain disulfide bond is thought to occur upon receptor recognition in order to allow membrane fusion (By similarity).</text>
</comment>
<feature type="signal peptide" evidence="2">
    <location>
        <begin position="1"/>
        <end position="22"/>
    </location>
</feature>
<feature type="chain" id="PRO_0000239607" description="Envelope glycoprotein">
    <location>
        <begin position="23"/>
        <end position="574"/>
    </location>
</feature>
<feature type="chain" id="PRO_0000040807" description="Surface protein" evidence="1">
    <location>
        <begin position="23"/>
        <end position="382"/>
    </location>
</feature>
<feature type="chain" id="PRO_0000040808" description="Transmembrane protein" evidence="1">
    <location>
        <begin position="383"/>
        <end position="556"/>
    </location>
</feature>
<feature type="peptide" id="PRO_0000239608" description="R-peptide" evidence="1">
    <location>
        <begin position="557"/>
        <end position="574"/>
    </location>
</feature>
<feature type="topological domain" description="Extracellular" evidence="2">
    <location>
        <begin position="23"/>
        <end position="514"/>
    </location>
</feature>
<feature type="transmembrane region" description="Helical" evidence="2">
    <location>
        <begin position="515"/>
        <end position="535"/>
    </location>
</feature>
<feature type="topological domain" description="Cytoplasmic" evidence="2">
    <location>
        <begin position="536"/>
        <end position="574"/>
    </location>
</feature>
<feature type="region of interest" description="Fusion peptide" evidence="1">
    <location>
        <begin position="386"/>
        <end position="406"/>
    </location>
</feature>
<feature type="region of interest" description="Immunosuppression" evidence="1">
    <location>
        <begin position="446"/>
        <end position="462"/>
    </location>
</feature>
<feature type="coiled-coil region" evidence="2">
    <location>
        <begin position="407"/>
        <end position="457"/>
    </location>
</feature>
<feature type="coiled-coil region" evidence="2">
    <location>
        <begin position="467"/>
        <end position="503"/>
    </location>
</feature>
<feature type="short sequence motif" description="CXXC">
    <location>
        <begin position="243"/>
        <end position="246"/>
    </location>
</feature>
<feature type="short sequence motif" description="CX6CC">
    <location>
        <begin position="463"/>
        <end position="471"/>
    </location>
</feature>
<feature type="short sequence motif" description="YXXL motif; contains endocytosis signal" evidence="1">
    <location>
        <begin position="558"/>
        <end position="561"/>
    </location>
</feature>
<feature type="site" description="Cleavage; by host" evidence="1">
    <location>
        <begin position="382"/>
        <end position="383"/>
    </location>
</feature>
<feature type="site" description="Cleavage; by viral protease" evidence="1">
    <location>
        <begin position="556"/>
        <end position="557"/>
    </location>
</feature>
<feature type="glycosylation site" description="N-linked (GlcNAc...) asparagine; by host" evidence="2">
    <location>
        <position position="117"/>
    </location>
</feature>
<feature type="glycosylation site" description="N-linked (GlcNAc...) asparagine; by host" evidence="2">
    <location>
        <position position="233"/>
    </location>
</feature>
<feature type="glycosylation site" description="N-linked (GlcNAc...) asparagine; by host" evidence="2">
    <location>
        <position position="260"/>
    </location>
</feature>
<feature type="glycosylation site" description="N-linked (GlcNAc...) asparagine; by host" evidence="2">
    <location>
        <position position="267"/>
    </location>
</feature>
<feature type="glycosylation site" description="N-linked (GlcNAc...) asparagine; by host" evidence="2">
    <location>
        <position position="288"/>
    </location>
</feature>
<feature type="glycosylation site" description="N-linked (GlcNAc...) asparagine; by host" evidence="2">
    <location>
        <position position="298"/>
    </location>
</feature>
<feature type="glycosylation site" description="N-linked (GlcNAc...) asparagine; by host" evidence="2">
    <location>
        <position position="312"/>
    </location>
</feature>
<feature type="glycosylation site" description="N-linked (GlcNAc...) asparagine; by host" evidence="2">
    <location>
        <position position="318"/>
    </location>
</feature>
<feature type="glycosylation site" description="N-linked (GlcNAc...) asparagine; by host" evidence="2">
    <location>
        <position position="327"/>
    </location>
</feature>
<feature type="glycosylation site" description="N-linked (GlcNAc...) asparagine; by host" evidence="2">
    <location>
        <position position="345"/>
    </location>
</feature>
<feature type="glycosylation site" description="N-linked (GlcNAc...) asparagine; by host" evidence="2">
    <location>
        <position position="475"/>
    </location>
</feature>
<feature type="disulfide bond" description="Interchain (between SU and TM chains, or C-246 with C-471); in linked form" evidence="1">
    <location>
        <begin position="243"/>
        <end position="471"/>
    </location>
</feature>
<feature type="disulfide bond" evidence="1">
    <location>
        <begin position="243"/>
        <end position="246"/>
    </location>
</feature>
<feature type="disulfide bond" evidence="1">
    <location>
        <begin position="463"/>
        <end position="470"/>
    </location>
</feature>
<reference key="1">
    <citation type="journal article" date="1995" name="J. Virol.">
        <title>Simian AIDS type D serogroup 2 retrovirus: isolation of an infectious molecular clone and sequence analyses of its envelope glycoprotein gene and 3' long terminal repeat.</title>
        <authorList>
            <person name="Marracci G.H."/>
            <person name="Kelley R.D."/>
            <person name="Pilcher K.Y."/>
            <person name="Crabtree L."/>
            <person name="Shiigi S.M."/>
            <person name="Avery N."/>
            <person name="Leo G."/>
            <person name="Webb M.C."/>
            <person name="Hallick L.M."/>
            <person name="Axthelm M.K."/>
            <person name="Machida A."/>
        </authorList>
    </citation>
    <scope>NUCLEOTIDE SEQUENCE [GENOMIC DNA]</scope>
</reference>
<organism>
    <name type="scientific">Simian retrovirus SRV-2 (isolate 2R-18B1)</name>
    <dbReference type="NCBI Taxonomy" id="73490"/>
    <lineage>
        <taxon>Viruses</taxon>
        <taxon>Riboviria</taxon>
        <taxon>Pararnavirae</taxon>
        <taxon>Artverviricota</taxon>
        <taxon>Revtraviricetes</taxon>
        <taxon>Ortervirales</taxon>
        <taxon>Retroviridae</taxon>
        <taxon>Orthoretrovirinae</taxon>
        <taxon>Betaretrovirus</taxon>
        <taxon>Mason-Pfizer monkey virus</taxon>
    </lineage>
</organism>